<sequence length="292" mass="31582">MTIIIDGKKIANDLCERLSQKIDILKREYNIFPCLKVILIGSNPASQVYVRNKQKKAESIGISSETIVLPNNILEDELIEKINELNEDPSVHGILVQLPLPNHISASRVINTVSVEKDVDGFHDENVGKLVKGEKNCLIPCTPKGSLHLIKSIEENLSGKNAVVIGRSNIVGKPMFYLLLQENCTVTILHSQSKDLAEYCSKADIVVAAVGKPNFVQADWIKKGAIVIDVGINSVNVGKLVGDVDFEGIKGKAKAMTPVPGGVGPMTIAFLMMNTVIAACLQKGVDASDFIS</sequence>
<feature type="chain" id="PRO_0000268562" description="Bifunctional protein FolD">
    <location>
        <begin position="1"/>
        <end position="292"/>
    </location>
</feature>
<feature type="binding site" evidence="1">
    <location>
        <begin position="166"/>
        <end position="168"/>
    </location>
    <ligand>
        <name>NADP(+)</name>
        <dbReference type="ChEBI" id="CHEBI:58349"/>
    </ligand>
</feature>
<feature type="binding site" evidence="1">
    <location>
        <position position="191"/>
    </location>
    <ligand>
        <name>NADP(+)</name>
        <dbReference type="ChEBI" id="CHEBI:58349"/>
    </ligand>
</feature>
<feature type="binding site" evidence="1">
    <location>
        <position position="232"/>
    </location>
    <ligand>
        <name>NADP(+)</name>
        <dbReference type="ChEBI" id="CHEBI:58349"/>
    </ligand>
</feature>
<reference key="1">
    <citation type="journal article" date="2004" name="PLoS Biol.">
        <title>Phylogenomics of the reproductive parasite Wolbachia pipientis wMel: a streamlined genome overrun by mobile genetic elements.</title>
        <authorList>
            <person name="Wu M."/>
            <person name="Sun L.V."/>
            <person name="Vamathevan J.J."/>
            <person name="Riegler M."/>
            <person name="DeBoy R.T."/>
            <person name="Brownlie J.C."/>
            <person name="McGraw E.A."/>
            <person name="Martin W."/>
            <person name="Esser C."/>
            <person name="Ahmadinejad N."/>
            <person name="Wiegand C."/>
            <person name="Madupu R."/>
            <person name="Beanan M.J."/>
            <person name="Brinkac L.M."/>
            <person name="Daugherty S.C."/>
            <person name="Durkin A.S."/>
            <person name="Kolonay J.F."/>
            <person name="Nelson W.C."/>
            <person name="Mohamoud Y."/>
            <person name="Lee P."/>
            <person name="Berry K.J."/>
            <person name="Young M.B."/>
            <person name="Utterback T.R."/>
            <person name="Weidman J.F."/>
            <person name="Nierman W.C."/>
            <person name="Paulsen I.T."/>
            <person name="Nelson K.E."/>
            <person name="Tettelin H."/>
            <person name="O'Neill S.L."/>
            <person name="Eisen J.A."/>
        </authorList>
    </citation>
    <scope>NUCLEOTIDE SEQUENCE [LARGE SCALE GENOMIC DNA]</scope>
</reference>
<gene>
    <name evidence="1" type="primary">folD</name>
    <name type="ordered locus">WD_0555</name>
</gene>
<keyword id="KW-0028">Amino-acid biosynthesis</keyword>
<keyword id="KW-0368">Histidine biosynthesis</keyword>
<keyword id="KW-0378">Hydrolase</keyword>
<keyword id="KW-0486">Methionine biosynthesis</keyword>
<keyword id="KW-0511">Multifunctional enzyme</keyword>
<keyword id="KW-0521">NADP</keyword>
<keyword id="KW-0554">One-carbon metabolism</keyword>
<keyword id="KW-0560">Oxidoreductase</keyword>
<keyword id="KW-0658">Purine biosynthesis</keyword>
<accession>Q73HK3</accession>
<protein>
    <recommendedName>
        <fullName evidence="1">Bifunctional protein FolD</fullName>
    </recommendedName>
    <domain>
        <recommendedName>
            <fullName evidence="1">Methylenetetrahydrofolate dehydrogenase</fullName>
            <ecNumber evidence="1">1.5.1.5</ecNumber>
        </recommendedName>
    </domain>
    <domain>
        <recommendedName>
            <fullName evidence="1">Methenyltetrahydrofolate cyclohydrolase</fullName>
            <ecNumber evidence="1">3.5.4.9</ecNumber>
        </recommendedName>
    </domain>
</protein>
<comment type="function">
    <text evidence="1">Catalyzes the oxidation of 5,10-methylenetetrahydrofolate to 5,10-methenyltetrahydrofolate and then the hydrolysis of 5,10-methenyltetrahydrofolate to 10-formyltetrahydrofolate.</text>
</comment>
<comment type="catalytic activity">
    <reaction evidence="1">
        <text>(6R)-5,10-methylene-5,6,7,8-tetrahydrofolate + NADP(+) = (6R)-5,10-methenyltetrahydrofolate + NADPH</text>
        <dbReference type="Rhea" id="RHEA:22812"/>
        <dbReference type="ChEBI" id="CHEBI:15636"/>
        <dbReference type="ChEBI" id="CHEBI:57455"/>
        <dbReference type="ChEBI" id="CHEBI:57783"/>
        <dbReference type="ChEBI" id="CHEBI:58349"/>
        <dbReference type="EC" id="1.5.1.5"/>
    </reaction>
</comment>
<comment type="catalytic activity">
    <reaction evidence="1">
        <text>(6R)-5,10-methenyltetrahydrofolate + H2O = (6R)-10-formyltetrahydrofolate + H(+)</text>
        <dbReference type="Rhea" id="RHEA:23700"/>
        <dbReference type="ChEBI" id="CHEBI:15377"/>
        <dbReference type="ChEBI" id="CHEBI:15378"/>
        <dbReference type="ChEBI" id="CHEBI:57455"/>
        <dbReference type="ChEBI" id="CHEBI:195366"/>
        <dbReference type="EC" id="3.5.4.9"/>
    </reaction>
</comment>
<comment type="pathway">
    <text evidence="1">One-carbon metabolism; tetrahydrofolate interconversion.</text>
</comment>
<comment type="subunit">
    <text evidence="1">Homodimer.</text>
</comment>
<comment type="similarity">
    <text evidence="1">Belongs to the tetrahydrofolate dehydrogenase/cyclohydrolase family.</text>
</comment>
<evidence type="ECO:0000255" key="1">
    <source>
        <dbReference type="HAMAP-Rule" id="MF_01576"/>
    </source>
</evidence>
<proteinExistence type="inferred from homology"/>
<dbReference type="EC" id="1.5.1.5" evidence="1"/>
<dbReference type="EC" id="3.5.4.9" evidence="1"/>
<dbReference type="EMBL" id="AE017196">
    <property type="protein sequence ID" value="AAS14262.1"/>
    <property type="molecule type" value="Genomic_DNA"/>
</dbReference>
<dbReference type="RefSeq" id="WP_010082295.1">
    <property type="nucleotide sequence ID" value="NZ_OX384529.1"/>
</dbReference>
<dbReference type="SMR" id="Q73HK3"/>
<dbReference type="EnsemblBacteria" id="AAS14262">
    <property type="protein sequence ID" value="AAS14262"/>
    <property type="gene ID" value="WD_0555"/>
</dbReference>
<dbReference type="GeneID" id="70036041"/>
<dbReference type="KEGG" id="wol:WD_0555"/>
<dbReference type="eggNOG" id="COG0190">
    <property type="taxonomic scope" value="Bacteria"/>
</dbReference>
<dbReference type="UniPathway" id="UPA00193"/>
<dbReference type="Proteomes" id="UP000008215">
    <property type="component" value="Chromosome"/>
</dbReference>
<dbReference type="GO" id="GO:0005829">
    <property type="term" value="C:cytosol"/>
    <property type="evidence" value="ECO:0007669"/>
    <property type="project" value="TreeGrafter"/>
</dbReference>
<dbReference type="GO" id="GO:0004477">
    <property type="term" value="F:methenyltetrahydrofolate cyclohydrolase activity"/>
    <property type="evidence" value="ECO:0007669"/>
    <property type="project" value="UniProtKB-UniRule"/>
</dbReference>
<dbReference type="GO" id="GO:0004488">
    <property type="term" value="F:methylenetetrahydrofolate dehydrogenase (NADP+) activity"/>
    <property type="evidence" value="ECO:0007669"/>
    <property type="project" value="UniProtKB-UniRule"/>
</dbReference>
<dbReference type="GO" id="GO:0000105">
    <property type="term" value="P:L-histidine biosynthetic process"/>
    <property type="evidence" value="ECO:0007669"/>
    <property type="project" value="UniProtKB-KW"/>
</dbReference>
<dbReference type="GO" id="GO:0009086">
    <property type="term" value="P:methionine biosynthetic process"/>
    <property type="evidence" value="ECO:0007669"/>
    <property type="project" value="UniProtKB-KW"/>
</dbReference>
<dbReference type="GO" id="GO:0006164">
    <property type="term" value="P:purine nucleotide biosynthetic process"/>
    <property type="evidence" value="ECO:0007669"/>
    <property type="project" value="UniProtKB-KW"/>
</dbReference>
<dbReference type="GO" id="GO:0035999">
    <property type="term" value="P:tetrahydrofolate interconversion"/>
    <property type="evidence" value="ECO:0007669"/>
    <property type="project" value="UniProtKB-UniRule"/>
</dbReference>
<dbReference type="CDD" id="cd01080">
    <property type="entry name" value="NAD_bind_m-THF_DH_Cyclohyd"/>
    <property type="match status" value="1"/>
</dbReference>
<dbReference type="FunFam" id="3.40.50.720:FF:000094">
    <property type="entry name" value="Bifunctional protein FolD"/>
    <property type="match status" value="1"/>
</dbReference>
<dbReference type="FunFam" id="3.40.50.10860:FF:000005">
    <property type="entry name" value="C-1-tetrahydrofolate synthase, cytoplasmic, putative"/>
    <property type="match status" value="1"/>
</dbReference>
<dbReference type="Gene3D" id="3.40.50.10860">
    <property type="entry name" value="Leucine Dehydrogenase, chain A, domain 1"/>
    <property type="match status" value="1"/>
</dbReference>
<dbReference type="Gene3D" id="3.40.50.720">
    <property type="entry name" value="NAD(P)-binding Rossmann-like Domain"/>
    <property type="match status" value="1"/>
</dbReference>
<dbReference type="HAMAP" id="MF_01576">
    <property type="entry name" value="THF_DHG_CYH"/>
    <property type="match status" value="1"/>
</dbReference>
<dbReference type="InterPro" id="IPR046346">
    <property type="entry name" value="Aminoacid_DH-like_N_sf"/>
</dbReference>
<dbReference type="InterPro" id="IPR036291">
    <property type="entry name" value="NAD(P)-bd_dom_sf"/>
</dbReference>
<dbReference type="InterPro" id="IPR000672">
    <property type="entry name" value="THF_DH/CycHdrlase"/>
</dbReference>
<dbReference type="InterPro" id="IPR020630">
    <property type="entry name" value="THF_DH/CycHdrlase_cat_dom"/>
</dbReference>
<dbReference type="InterPro" id="IPR020867">
    <property type="entry name" value="THF_DH/CycHdrlase_CS"/>
</dbReference>
<dbReference type="InterPro" id="IPR020631">
    <property type="entry name" value="THF_DH/CycHdrlase_NAD-bd_dom"/>
</dbReference>
<dbReference type="NCBIfam" id="NF008058">
    <property type="entry name" value="PRK10792.1"/>
    <property type="match status" value="1"/>
</dbReference>
<dbReference type="NCBIfam" id="NF010784">
    <property type="entry name" value="PRK14187.1"/>
    <property type="match status" value="1"/>
</dbReference>
<dbReference type="NCBIfam" id="NF010785">
    <property type="entry name" value="PRK14188.1"/>
    <property type="match status" value="1"/>
</dbReference>
<dbReference type="PANTHER" id="PTHR48099:SF5">
    <property type="entry name" value="C-1-TETRAHYDROFOLATE SYNTHASE, CYTOPLASMIC"/>
    <property type="match status" value="1"/>
</dbReference>
<dbReference type="PANTHER" id="PTHR48099">
    <property type="entry name" value="C-1-TETRAHYDROFOLATE SYNTHASE, CYTOPLASMIC-RELATED"/>
    <property type="match status" value="1"/>
</dbReference>
<dbReference type="Pfam" id="PF00763">
    <property type="entry name" value="THF_DHG_CYH"/>
    <property type="match status" value="1"/>
</dbReference>
<dbReference type="Pfam" id="PF02882">
    <property type="entry name" value="THF_DHG_CYH_C"/>
    <property type="match status" value="1"/>
</dbReference>
<dbReference type="PRINTS" id="PR00085">
    <property type="entry name" value="THFDHDRGNASE"/>
</dbReference>
<dbReference type="SUPFAM" id="SSF53223">
    <property type="entry name" value="Aminoacid dehydrogenase-like, N-terminal domain"/>
    <property type="match status" value="1"/>
</dbReference>
<dbReference type="SUPFAM" id="SSF51735">
    <property type="entry name" value="NAD(P)-binding Rossmann-fold domains"/>
    <property type="match status" value="1"/>
</dbReference>
<dbReference type="PROSITE" id="PS00766">
    <property type="entry name" value="THF_DHG_CYH_1"/>
    <property type="match status" value="1"/>
</dbReference>
<dbReference type="PROSITE" id="PS00767">
    <property type="entry name" value="THF_DHG_CYH_2"/>
    <property type="match status" value="1"/>
</dbReference>
<name>FOLD_WOLPM</name>
<organism>
    <name type="scientific">Wolbachia pipientis wMel</name>
    <dbReference type="NCBI Taxonomy" id="163164"/>
    <lineage>
        <taxon>Bacteria</taxon>
        <taxon>Pseudomonadati</taxon>
        <taxon>Pseudomonadota</taxon>
        <taxon>Alphaproteobacteria</taxon>
        <taxon>Rickettsiales</taxon>
        <taxon>Anaplasmataceae</taxon>
        <taxon>Wolbachieae</taxon>
        <taxon>Wolbachia</taxon>
    </lineage>
</organism>